<protein>
    <recommendedName>
        <fullName evidence="2">Conotoxin Ama1251</fullName>
    </recommendedName>
</protein>
<accession>P0DUU3</accession>
<feature type="peptide" id="PRO_0000453582" description="Conotoxin Ama1251" evidence="1">
    <location>
        <begin position="1"/>
        <end position="11"/>
    </location>
</feature>
<feature type="unsure residue" description="Q or K" evidence="4">
    <location>
        <position position="7"/>
    </location>
</feature>
<reference key="1">
    <citation type="journal article" date="2019" name="Protein Pept. Lett.">
        <title>Proteome based de novo sequencing of novel conotoxins from marine molluscivorous cone snail Conus amadis and neurological activities of its natural venom in zebrafish model.</title>
        <authorList>
            <person name="Rajesh R.P."/>
            <person name="Franklin J.B."/>
            <person name="Badsha I."/>
            <person name="Arjun P."/>
            <person name="Jain R.P."/>
            <person name="Vignesh M.S."/>
            <person name="Kannan R.R."/>
        </authorList>
    </citation>
    <scope>PROTEIN SEQUENCE</scope>
    <scope>SUBCELLULAR LOCATION</scope>
    <scope>MASS SPECTROMETRY</scope>
    <source>
        <tissue>Venom</tissue>
    </source>
</reference>
<sequence length="11" mass="1255">DSCCIEQHCCD</sequence>
<proteinExistence type="evidence at protein level"/>
<comment type="function">
    <text evidence="3">Probable toxin that inhibits ion channels.</text>
</comment>
<comment type="subcellular location">
    <subcellularLocation>
        <location evidence="1">Secreted</location>
    </subcellularLocation>
</comment>
<comment type="tissue specificity">
    <text evidence="4">Expressed by the venom duct.</text>
</comment>
<comment type="domain">
    <text>The cysteine framework is V (CC-CC).</text>
</comment>
<comment type="PTM">
    <text evidence="3">Contains 2 disulfide bonds that can be either 'C1-C3, C2-C4' or 'C1-C4, C2-C3', since these disulfide connectivities have been observed for conotoxins with cysteine framework V (for examples, see AC P0DQQ7 and AC P81755).</text>
</comment>
<comment type="mass spectrometry" mass="1251.4" method="MALDI" evidence="1"/>
<name>T1251_CONAA</name>
<organism>
    <name type="scientific">Conus amadis</name>
    <name type="common">Amadis cone</name>
    <dbReference type="NCBI Taxonomy" id="198732"/>
    <lineage>
        <taxon>Eukaryota</taxon>
        <taxon>Metazoa</taxon>
        <taxon>Spiralia</taxon>
        <taxon>Lophotrochozoa</taxon>
        <taxon>Mollusca</taxon>
        <taxon>Gastropoda</taxon>
        <taxon>Caenogastropoda</taxon>
        <taxon>Neogastropoda</taxon>
        <taxon>Conoidea</taxon>
        <taxon>Conidae</taxon>
        <taxon>Conus</taxon>
        <taxon>Leptoconus</taxon>
    </lineage>
</organism>
<keyword id="KW-0903">Direct protein sequencing</keyword>
<keyword id="KW-1015">Disulfide bond</keyword>
<keyword id="KW-0872">Ion channel impairing toxin</keyword>
<keyword id="KW-0964">Secreted</keyword>
<keyword id="KW-0800">Toxin</keyword>
<dbReference type="GO" id="GO:0005576">
    <property type="term" value="C:extracellular region"/>
    <property type="evidence" value="ECO:0007669"/>
    <property type="project" value="UniProtKB-SubCell"/>
</dbReference>
<dbReference type="GO" id="GO:0099106">
    <property type="term" value="F:ion channel regulator activity"/>
    <property type="evidence" value="ECO:0007669"/>
    <property type="project" value="UniProtKB-KW"/>
</dbReference>
<dbReference type="GO" id="GO:0090729">
    <property type="term" value="F:toxin activity"/>
    <property type="evidence" value="ECO:0007669"/>
    <property type="project" value="UniProtKB-KW"/>
</dbReference>
<evidence type="ECO:0000269" key="1">
    <source>
    </source>
</evidence>
<evidence type="ECO:0000303" key="2">
    <source>
    </source>
</evidence>
<evidence type="ECO:0000305" key="3"/>
<evidence type="ECO:0000305" key="4">
    <source>
    </source>
</evidence>